<evidence type="ECO:0000255" key="1">
    <source>
        <dbReference type="HAMAP-Rule" id="MF_00131"/>
    </source>
</evidence>
<name>TRPA_ECOL6</name>
<feature type="chain" id="PRO_0000098780" description="Tryptophan synthase alpha chain">
    <location>
        <begin position="1"/>
        <end position="268"/>
    </location>
</feature>
<feature type="active site" description="Proton acceptor" evidence="1">
    <location>
        <position position="49"/>
    </location>
</feature>
<feature type="active site" description="Proton acceptor" evidence="1">
    <location>
        <position position="60"/>
    </location>
</feature>
<sequence>MERYESLFAQLKERKEGAFVPFVTLGDPGIEQSLKIIDTLIEAGADALELGIPFSDPLADGPTIQNATLRAFAAGVTPAQCFEMLALIRQKHPTIPIGLLMYANLVFNKGIDEFYAECEKVGVDSVLVADVPVEESAPFRQAALRHNVAPIFICPPNADDDLLRQIASYGRGYTYLLSRAGVTGAENRAALPLNHLVAKLKEYNAAPPLQGFGISAPDQVKAAIDAGAAGAISGSAIVKIIEQHINEPEKMLAALKAFVQPMKAATRS</sequence>
<organism>
    <name type="scientific">Escherichia coli O6:H1 (strain CFT073 / ATCC 700928 / UPEC)</name>
    <dbReference type="NCBI Taxonomy" id="199310"/>
    <lineage>
        <taxon>Bacteria</taxon>
        <taxon>Pseudomonadati</taxon>
        <taxon>Pseudomonadota</taxon>
        <taxon>Gammaproteobacteria</taxon>
        <taxon>Enterobacterales</taxon>
        <taxon>Enterobacteriaceae</taxon>
        <taxon>Escherichia</taxon>
    </lineage>
</organism>
<gene>
    <name evidence="1" type="primary">trpA</name>
    <name type="ordered locus">c1725</name>
</gene>
<protein>
    <recommendedName>
        <fullName evidence="1">Tryptophan synthase alpha chain</fullName>
        <ecNumber evidence="1">4.2.1.20</ecNumber>
    </recommendedName>
</protein>
<dbReference type="EC" id="4.2.1.20" evidence="1"/>
<dbReference type="EMBL" id="AE014075">
    <property type="protein sequence ID" value="AAN80192.1"/>
    <property type="molecule type" value="Genomic_DNA"/>
</dbReference>
<dbReference type="RefSeq" id="WP_000443048.1">
    <property type="nucleotide sequence ID" value="NZ_CP051263.1"/>
</dbReference>
<dbReference type="SMR" id="Q8FHW0"/>
<dbReference type="STRING" id="199310.c1725"/>
<dbReference type="KEGG" id="ecc:c1725"/>
<dbReference type="eggNOG" id="COG0159">
    <property type="taxonomic scope" value="Bacteria"/>
</dbReference>
<dbReference type="HOGENOM" id="CLU_016734_0_4_6"/>
<dbReference type="BioCyc" id="ECOL199310:C1725-MONOMER"/>
<dbReference type="UniPathway" id="UPA00035">
    <property type="reaction ID" value="UER00044"/>
</dbReference>
<dbReference type="Proteomes" id="UP000001410">
    <property type="component" value="Chromosome"/>
</dbReference>
<dbReference type="GO" id="GO:0005829">
    <property type="term" value="C:cytosol"/>
    <property type="evidence" value="ECO:0007669"/>
    <property type="project" value="TreeGrafter"/>
</dbReference>
<dbReference type="GO" id="GO:0004834">
    <property type="term" value="F:tryptophan synthase activity"/>
    <property type="evidence" value="ECO:0007669"/>
    <property type="project" value="UniProtKB-UniRule"/>
</dbReference>
<dbReference type="CDD" id="cd04724">
    <property type="entry name" value="Tryptophan_synthase_alpha"/>
    <property type="match status" value="1"/>
</dbReference>
<dbReference type="FunFam" id="3.20.20.70:FF:000037">
    <property type="entry name" value="Tryptophan synthase alpha chain"/>
    <property type="match status" value="1"/>
</dbReference>
<dbReference type="Gene3D" id="3.20.20.70">
    <property type="entry name" value="Aldolase class I"/>
    <property type="match status" value="1"/>
</dbReference>
<dbReference type="HAMAP" id="MF_00131">
    <property type="entry name" value="Trp_synth_alpha"/>
    <property type="match status" value="1"/>
</dbReference>
<dbReference type="InterPro" id="IPR013785">
    <property type="entry name" value="Aldolase_TIM"/>
</dbReference>
<dbReference type="InterPro" id="IPR011060">
    <property type="entry name" value="RibuloseP-bd_barrel"/>
</dbReference>
<dbReference type="InterPro" id="IPR018204">
    <property type="entry name" value="Trp_synthase_alpha_AS"/>
</dbReference>
<dbReference type="InterPro" id="IPR002028">
    <property type="entry name" value="Trp_synthase_suA"/>
</dbReference>
<dbReference type="NCBIfam" id="TIGR00262">
    <property type="entry name" value="trpA"/>
    <property type="match status" value="1"/>
</dbReference>
<dbReference type="PANTHER" id="PTHR43406:SF1">
    <property type="entry name" value="TRYPTOPHAN SYNTHASE ALPHA CHAIN, CHLOROPLASTIC"/>
    <property type="match status" value="1"/>
</dbReference>
<dbReference type="PANTHER" id="PTHR43406">
    <property type="entry name" value="TRYPTOPHAN SYNTHASE, ALPHA CHAIN"/>
    <property type="match status" value="1"/>
</dbReference>
<dbReference type="Pfam" id="PF00290">
    <property type="entry name" value="Trp_syntA"/>
    <property type="match status" value="1"/>
</dbReference>
<dbReference type="SUPFAM" id="SSF51366">
    <property type="entry name" value="Ribulose-phoshate binding barrel"/>
    <property type="match status" value="1"/>
</dbReference>
<dbReference type="PROSITE" id="PS00167">
    <property type="entry name" value="TRP_SYNTHASE_ALPHA"/>
    <property type="match status" value="1"/>
</dbReference>
<accession>Q8FHW0</accession>
<keyword id="KW-0028">Amino-acid biosynthesis</keyword>
<keyword id="KW-0057">Aromatic amino acid biosynthesis</keyword>
<keyword id="KW-0456">Lyase</keyword>
<keyword id="KW-1185">Reference proteome</keyword>
<keyword id="KW-0822">Tryptophan biosynthesis</keyword>
<comment type="function">
    <text evidence="1">The alpha subunit is responsible for the aldol cleavage of indoleglycerol phosphate to indole and glyceraldehyde 3-phosphate.</text>
</comment>
<comment type="catalytic activity">
    <reaction evidence="1">
        <text>(1S,2R)-1-C-(indol-3-yl)glycerol 3-phosphate + L-serine = D-glyceraldehyde 3-phosphate + L-tryptophan + H2O</text>
        <dbReference type="Rhea" id="RHEA:10532"/>
        <dbReference type="ChEBI" id="CHEBI:15377"/>
        <dbReference type="ChEBI" id="CHEBI:33384"/>
        <dbReference type="ChEBI" id="CHEBI:57912"/>
        <dbReference type="ChEBI" id="CHEBI:58866"/>
        <dbReference type="ChEBI" id="CHEBI:59776"/>
        <dbReference type="EC" id="4.2.1.20"/>
    </reaction>
</comment>
<comment type="pathway">
    <text evidence="1">Amino-acid biosynthesis; L-tryptophan biosynthesis; L-tryptophan from chorismate: step 5/5.</text>
</comment>
<comment type="subunit">
    <text evidence="1">Tetramer of two alpha and two beta chains.</text>
</comment>
<comment type="similarity">
    <text evidence="1">Belongs to the TrpA family.</text>
</comment>
<proteinExistence type="inferred from homology"/>
<reference key="1">
    <citation type="journal article" date="2002" name="Proc. Natl. Acad. Sci. U.S.A.">
        <title>Extensive mosaic structure revealed by the complete genome sequence of uropathogenic Escherichia coli.</title>
        <authorList>
            <person name="Welch R.A."/>
            <person name="Burland V."/>
            <person name="Plunkett G. III"/>
            <person name="Redford P."/>
            <person name="Roesch P."/>
            <person name="Rasko D."/>
            <person name="Buckles E.L."/>
            <person name="Liou S.-R."/>
            <person name="Boutin A."/>
            <person name="Hackett J."/>
            <person name="Stroud D."/>
            <person name="Mayhew G.F."/>
            <person name="Rose D.J."/>
            <person name="Zhou S."/>
            <person name="Schwartz D.C."/>
            <person name="Perna N.T."/>
            <person name="Mobley H.L.T."/>
            <person name="Donnenberg M.S."/>
            <person name="Blattner F.R."/>
        </authorList>
    </citation>
    <scope>NUCLEOTIDE SEQUENCE [LARGE SCALE GENOMIC DNA]</scope>
    <source>
        <strain>CFT073 / ATCC 700928 / UPEC</strain>
    </source>
</reference>